<gene>
    <name type="primary">PVALB</name>
</gene>
<proteinExistence type="inferred from homology"/>
<organism>
    <name type="scientific">Bos taurus</name>
    <name type="common">Bovine</name>
    <dbReference type="NCBI Taxonomy" id="9913"/>
    <lineage>
        <taxon>Eukaryota</taxon>
        <taxon>Metazoa</taxon>
        <taxon>Chordata</taxon>
        <taxon>Craniata</taxon>
        <taxon>Vertebrata</taxon>
        <taxon>Euteleostomi</taxon>
        <taxon>Mammalia</taxon>
        <taxon>Eutheria</taxon>
        <taxon>Laurasiatheria</taxon>
        <taxon>Artiodactyla</taxon>
        <taxon>Ruminantia</taxon>
        <taxon>Pecora</taxon>
        <taxon>Bovidae</taxon>
        <taxon>Bovinae</taxon>
        <taxon>Bos</taxon>
    </lineage>
</organism>
<dbReference type="EMBL" id="BC120184">
    <property type="protein sequence ID" value="AAI20185.1"/>
    <property type="molecule type" value="mRNA"/>
</dbReference>
<dbReference type="RefSeq" id="NP_001069582.1">
    <property type="nucleotide sequence ID" value="NM_001076114.2"/>
</dbReference>
<dbReference type="RefSeq" id="XP_010803641.1">
    <property type="nucleotide sequence ID" value="XM_010805339.4"/>
</dbReference>
<dbReference type="RefSeq" id="XP_024847747.1">
    <property type="nucleotide sequence ID" value="XM_024991979.2"/>
</dbReference>
<dbReference type="SMR" id="Q0VCG3"/>
<dbReference type="FunCoup" id="Q0VCG3">
    <property type="interactions" value="18"/>
</dbReference>
<dbReference type="STRING" id="9913.ENSBTAP00000025499"/>
<dbReference type="PaxDb" id="9913-ENSBTAP00000025499"/>
<dbReference type="Ensembl" id="ENSBTAT00000025499.5">
    <property type="protein sequence ID" value="ENSBTAP00000025499.3"/>
    <property type="gene ID" value="ENSBTAG00000019159.5"/>
</dbReference>
<dbReference type="GeneID" id="538603"/>
<dbReference type="KEGG" id="bta:538603"/>
<dbReference type="CTD" id="5816"/>
<dbReference type="VEuPathDB" id="HostDB:ENSBTAG00000019159"/>
<dbReference type="VGNC" id="VGNC:33579">
    <property type="gene designation" value="PVALB"/>
</dbReference>
<dbReference type="eggNOG" id="KOG0027">
    <property type="taxonomic scope" value="Eukaryota"/>
</dbReference>
<dbReference type="GeneTree" id="ENSGT00940000159653"/>
<dbReference type="HOGENOM" id="CLU_157356_0_0_1"/>
<dbReference type="InParanoid" id="Q0VCG3"/>
<dbReference type="OMA" id="FEMVGMR"/>
<dbReference type="OrthoDB" id="26525at2759"/>
<dbReference type="TreeFam" id="TF332342"/>
<dbReference type="Proteomes" id="UP000009136">
    <property type="component" value="Chromosome 5"/>
</dbReference>
<dbReference type="Bgee" id="ENSBTAG00000019159">
    <property type="expression patterns" value="Expressed in midbrain and 69 other cell types or tissues"/>
</dbReference>
<dbReference type="GO" id="GO:0030424">
    <property type="term" value="C:axon"/>
    <property type="evidence" value="ECO:0007669"/>
    <property type="project" value="Ensembl"/>
</dbReference>
<dbReference type="GO" id="GO:0005737">
    <property type="term" value="C:cytoplasm"/>
    <property type="evidence" value="ECO:0000318"/>
    <property type="project" value="GO_Central"/>
</dbReference>
<dbReference type="GO" id="GO:0045202">
    <property type="term" value="C:synapse"/>
    <property type="evidence" value="ECO:0007669"/>
    <property type="project" value="GOC"/>
</dbReference>
<dbReference type="GO" id="GO:0005509">
    <property type="term" value="F:calcium ion binding"/>
    <property type="evidence" value="ECO:0000318"/>
    <property type="project" value="GO_Central"/>
</dbReference>
<dbReference type="GO" id="GO:0098976">
    <property type="term" value="P:excitatory chemical synaptic transmission"/>
    <property type="evidence" value="ECO:0007669"/>
    <property type="project" value="Ensembl"/>
</dbReference>
<dbReference type="GO" id="GO:0010467">
    <property type="term" value="P:gene expression"/>
    <property type="evidence" value="ECO:0007669"/>
    <property type="project" value="Ensembl"/>
</dbReference>
<dbReference type="GO" id="GO:0098977">
    <property type="term" value="P:inhibitory chemical synaptic transmission"/>
    <property type="evidence" value="ECO:0007669"/>
    <property type="project" value="Ensembl"/>
</dbReference>
<dbReference type="CDD" id="cd16254">
    <property type="entry name" value="EFh_parvalbumin_alpha"/>
    <property type="match status" value="1"/>
</dbReference>
<dbReference type="FunFam" id="1.10.238.10:FF:000060">
    <property type="entry name" value="Parvalbumin, thymic"/>
    <property type="match status" value="1"/>
</dbReference>
<dbReference type="Gene3D" id="1.10.238.10">
    <property type="entry name" value="EF-hand"/>
    <property type="match status" value="1"/>
</dbReference>
<dbReference type="InterPro" id="IPR011992">
    <property type="entry name" value="EF-hand-dom_pair"/>
</dbReference>
<dbReference type="InterPro" id="IPR018247">
    <property type="entry name" value="EF_Hand_1_Ca_BS"/>
</dbReference>
<dbReference type="InterPro" id="IPR002048">
    <property type="entry name" value="EF_hand_dom"/>
</dbReference>
<dbReference type="InterPro" id="IPR008080">
    <property type="entry name" value="Parvalbumin"/>
</dbReference>
<dbReference type="PANTHER" id="PTHR11653">
    <property type="entry name" value="PARVALBUMIN ALPHA"/>
    <property type="match status" value="1"/>
</dbReference>
<dbReference type="PANTHER" id="PTHR11653:SF2">
    <property type="entry name" value="PARVALBUMIN ALPHA"/>
    <property type="match status" value="1"/>
</dbReference>
<dbReference type="Pfam" id="PF13499">
    <property type="entry name" value="EF-hand_7"/>
    <property type="match status" value="1"/>
</dbReference>
<dbReference type="PRINTS" id="PR01697">
    <property type="entry name" value="PARVALBUMIN"/>
</dbReference>
<dbReference type="SMART" id="SM00054">
    <property type="entry name" value="EFh"/>
    <property type="match status" value="2"/>
</dbReference>
<dbReference type="SUPFAM" id="SSF47473">
    <property type="entry name" value="EF-hand"/>
    <property type="match status" value="1"/>
</dbReference>
<dbReference type="PROSITE" id="PS00018">
    <property type="entry name" value="EF_HAND_1"/>
    <property type="match status" value="2"/>
</dbReference>
<dbReference type="PROSITE" id="PS50222">
    <property type="entry name" value="EF_HAND_2"/>
    <property type="match status" value="2"/>
</dbReference>
<keyword id="KW-0007">Acetylation</keyword>
<keyword id="KW-0106">Calcium</keyword>
<keyword id="KW-0479">Metal-binding</keyword>
<keyword id="KW-0514">Muscle protein</keyword>
<keyword id="KW-0597">Phosphoprotein</keyword>
<keyword id="KW-1185">Reference proteome</keyword>
<keyword id="KW-0677">Repeat</keyword>
<comment type="function">
    <text evidence="1 2">In muscle, parvalbumin is thought to be involved in relaxation after contraction (By similarity). It binds two calcium ions (By similarity).</text>
</comment>
<comment type="domain">
    <text evidence="2">AB domain, comprising of helices A and B, is involved in structural stabilization, protecting the hydrophobic core of the protein. It is required for high-affinity binding of Ca(2+) and for Mg(2+)-binding.</text>
</comment>
<comment type="similarity">
    <text evidence="5">Belongs to the parvalbumin family.</text>
</comment>
<feature type="initiator methionine" description="Removed" evidence="3">
    <location>
        <position position="1"/>
    </location>
</feature>
<feature type="chain" id="PRO_0000260257" description="Parvalbumin alpha">
    <location>
        <begin position="2"/>
        <end position="110"/>
    </location>
</feature>
<feature type="domain" description="EF-hand 1" evidence="4">
    <location>
        <begin position="39"/>
        <end position="74"/>
    </location>
</feature>
<feature type="domain" description="EF-hand 2" evidence="4">
    <location>
        <begin position="78"/>
        <end position="110"/>
    </location>
</feature>
<feature type="binding site" evidence="4">
    <location>
        <position position="52"/>
    </location>
    <ligand>
        <name>Ca(2+)</name>
        <dbReference type="ChEBI" id="CHEBI:29108"/>
        <label>1</label>
    </ligand>
</feature>
<feature type="binding site" evidence="4">
    <location>
        <position position="54"/>
    </location>
    <ligand>
        <name>Ca(2+)</name>
        <dbReference type="ChEBI" id="CHEBI:29108"/>
        <label>1</label>
    </ligand>
</feature>
<feature type="binding site" evidence="4">
    <location>
        <position position="56"/>
    </location>
    <ligand>
        <name>Ca(2+)</name>
        <dbReference type="ChEBI" id="CHEBI:29108"/>
        <label>1</label>
    </ligand>
</feature>
<feature type="binding site" evidence="2">
    <location>
        <position position="58"/>
    </location>
    <ligand>
        <name>Ca(2+)</name>
        <dbReference type="ChEBI" id="CHEBI:29108"/>
        <label>1</label>
    </ligand>
</feature>
<feature type="binding site" evidence="2">
    <location>
        <position position="60"/>
    </location>
    <ligand>
        <name>Ca(2+)</name>
        <dbReference type="ChEBI" id="CHEBI:29108"/>
        <label>1</label>
    </ligand>
</feature>
<feature type="binding site" evidence="4">
    <location>
        <position position="63"/>
    </location>
    <ligand>
        <name>Ca(2+)</name>
        <dbReference type="ChEBI" id="CHEBI:29108"/>
        <label>1</label>
    </ligand>
</feature>
<feature type="binding site" evidence="4">
    <location>
        <position position="91"/>
    </location>
    <ligand>
        <name>Ca(2+)</name>
        <dbReference type="ChEBI" id="CHEBI:29108"/>
        <label>2</label>
    </ligand>
</feature>
<feature type="binding site" evidence="4">
    <location>
        <position position="93"/>
    </location>
    <ligand>
        <name>Ca(2+)</name>
        <dbReference type="ChEBI" id="CHEBI:29108"/>
        <label>2</label>
    </ligand>
</feature>
<feature type="binding site" evidence="4">
    <location>
        <position position="95"/>
    </location>
    <ligand>
        <name>Ca(2+)</name>
        <dbReference type="ChEBI" id="CHEBI:29108"/>
        <label>2</label>
    </ligand>
</feature>
<feature type="binding site" evidence="4">
    <location>
        <position position="97"/>
    </location>
    <ligand>
        <name>Ca(2+)</name>
        <dbReference type="ChEBI" id="CHEBI:29108"/>
        <label>2</label>
    </ligand>
</feature>
<feature type="binding site" evidence="4">
    <location>
        <position position="102"/>
    </location>
    <ligand>
        <name>Ca(2+)</name>
        <dbReference type="ChEBI" id="CHEBI:29108"/>
        <label>2</label>
    </ligand>
</feature>
<feature type="modified residue" description="N-acetylserine" evidence="3">
    <location>
        <position position="2"/>
    </location>
</feature>
<feature type="modified residue" description="Phosphoserine" evidence="2">
    <location>
        <position position="2"/>
    </location>
</feature>
<feature type="modified residue" description="Phosphoserine" evidence="2">
    <location>
        <position position="24"/>
    </location>
</feature>
<reference key="1">
    <citation type="submission" date="2006-08" db="EMBL/GenBank/DDBJ databases">
        <authorList>
            <consortium name="NIH - Mammalian Gene Collection (MGC) project"/>
        </authorList>
    </citation>
    <scope>NUCLEOTIDE SEQUENCE [LARGE SCALE MRNA]</scope>
    <source>
        <strain>Hereford</strain>
        <tissue>Fetal cerebellum</tissue>
    </source>
</reference>
<sequence>MSMTDLLHAEDIKKAVGAFTAVDSFDHKKFFQMVGLKKKSPEDVKKVFHILDKDKSGFIEEEELGFILKGFSPDARDLSVKETKTLLAAGDKDGDGKIGADEFSTLVAES</sequence>
<accession>Q0VCG3</accession>
<evidence type="ECO:0000250" key="1">
    <source>
        <dbReference type="UniProtKB" id="P02624"/>
    </source>
</evidence>
<evidence type="ECO:0000250" key="2">
    <source>
        <dbReference type="UniProtKB" id="P02625"/>
    </source>
</evidence>
<evidence type="ECO:0000250" key="3">
    <source>
        <dbReference type="UniProtKB" id="P80079"/>
    </source>
</evidence>
<evidence type="ECO:0000255" key="4">
    <source>
        <dbReference type="PROSITE-ProRule" id="PRU00448"/>
    </source>
</evidence>
<evidence type="ECO:0000305" key="5"/>
<protein>
    <recommendedName>
        <fullName>Parvalbumin alpha</fullName>
    </recommendedName>
    <alternativeName>
        <fullName evidence="5">Alpha-parvalbumin</fullName>
        <shortName evidence="5">Alpha-PV</shortName>
    </alternativeName>
</protein>
<name>PRVA_BOVIN</name>